<sequence>MQRAARPLVSVSDLDADKAAALKLIPIPSALEARLDAYVALLQQWQAKTNLVAPSTLPQLWTRHVADSLQLVSLMPHARRWLDFGSGGGFPGVVLACAMADVGGHVTLVERIAKKAAFLREALRVAGAPGTVVLADIGDNVDRFPQALDCITARAVAPLHQLIGFAEPLMTPGITKALFLKGQDVDAELTESTKYWKFQPKLHASLTGGQGWIVEIDHIERRT</sequence>
<comment type="function">
    <text evidence="1">Specifically methylates the N7 position of guanine in position 527 of 16S rRNA.</text>
</comment>
<comment type="catalytic activity">
    <reaction evidence="1">
        <text>guanosine(527) in 16S rRNA + S-adenosyl-L-methionine = N(7)-methylguanosine(527) in 16S rRNA + S-adenosyl-L-homocysteine</text>
        <dbReference type="Rhea" id="RHEA:42732"/>
        <dbReference type="Rhea" id="RHEA-COMP:10209"/>
        <dbReference type="Rhea" id="RHEA-COMP:10210"/>
        <dbReference type="ChEBI" id="CHEBI:57856"/>
        <dbReference type="ChEBI" id="CHEBI:59789"/>
        <dbReference type="ChEBI" id="CHEBI:74269"/>
        <dbReference type="ChEBI" id="CHEBI:74480"/>
        <dbReference type="EC" id="2.1.1.170"/>
    </reaction>
</comment>
<comment type="subcellular location">
    <subcellularLocation>
        <location evidence="1">Cytoplasm</location>
    </subcellularLocation>
</comment>
<comment type="similarity">
    <text evidence="1">Belongs to the methyltransferase superfamily. RNA methyltransferase RsmG family.</text>
</comment>
<gene>
    <name evidence="1" type="primary">rsmG</name>
    <name type="ordered locus">Rpal_0295</name>
</gene>
<proteinExistence type="inferred from homology"/>
<accession>B3Q8A6</accession>
<evidence type="ECO:0000255" key="1">
    <source>
        <dbReference type="HAMAP-Rule" id="MF_00074"/>
    </source>
</evidence>
<dbReference type="EC" id="2.1.1.170" evidence="1"/>
<dbReference type="EMBL" id="CP001096">
    <property type="protein sequence ID" value="ACE98855.1"/>
    <property type="molecule type" value="Genomic_DNA"/>
</dbReference>
<dbReference type="RefSeq" id="WP_012494046.1">
    <property type="nucleotide sequence ID" value="NC_011004.1"/>
</dbReference>
<dbReference type="SMR" id="B3Q8A6"/>
<dbReference type="KEGG" id="rpt:Rpal_0295"/>
<dbReference type="HOGENOM" id="CLU_065341_1_0_5"/>
<dbReference type="OrthoDB" id="9808773at2"/>
<dbReference type="Proteomes" id="UP000001725">
    <property type="component" value="Chromosome"/>
</dbReference>
<dbReference type="GO" id="GO:0005829">
    <property type="term" value="C:cytosol"/>
    <property type="evidence" value="ECO:0007669"/>
    <property type="project" value="TreeGrafter"/>
</dbReference>
<dbReference type="GO" id="GO:0070043">
    <property type="term" value="F:rRNA (guanine-N7-)-methyltransferase activity"/>
    <property type="evidence" value="ECO:0007669"/>
    <property type="project" value="UniProtKB-UniRule"/>
</dbReference>
<dbReference type="Gene3D" id="3.40.50.150">
    <property type="entry name" value="Vaccinia Virus protein VP39"/>
    <property type="match status" value="1"/>
</dbReference>
<dbReference type="HAMAP" id="MF_00074">
    <property type="entry name" value="16SrRNA_methyltr_G"/>
    <property type="match status" value="1"/>
</dbReference>
<dbReference type="InterPro" id="IPR003682">
    <property type="entry name" value="rRNA_ssu_MeTfrase_G"/>
</dbReference>
<dbReference type="InterPro" id="IPR029063">
    <property type="entry name" value="SAM-dependent_MTases_sf"/>
</dbReference>
<dbReference type="NCBIfam" id="TIGR00138">
    <property type="entry name" value="rsmG_gidB"/>
    <property type="match status" value="1"/>
</dbReference>
<dbReference type="PANTHER" id="PTHR31760">
    <property type="entry name" value="S-ADENOSYL-L-METHIONINE-DEPENDENT METHYLTRANSFERASES SUPERFAMILY PROTEIN"/>
    <property type="match status" value="1"/>
</dbReference>
<dbReference type="PANTHER" id="PTHR31760:SF0">
    <property type="entry name" value="S-ADENOSYL-L-METHIONINE-DEPENDENT METHYLTRANSFERASES SUPERFAMILY PROTEIN"/>
    <property type="match status" value="1"/>
</dbReference>
<dbReference type="Pfam" id="PF02527">
    <property type="entry name" value="GidB"/>
    <property type="match status" value="1"/>
</dbReference>
<dbReference type="PIRSF" id="PIRSF003078">
    <property type="entry name" value="GidB"/>
    <property type="match status" value="1"/>
</dbReference>
<dbReference type="SUPFAM" id="SSF53335">
    <property type="entry name" value="S-adenosyl-L-methionine-dependent methyltransferases"/>
    <property type="match status" value="1"/>
</dbReference>
<organism>
    <name type="scientific">Rhodopseudomonas palustris (strain TIE-1)</name>
    <dbReference type="NCBI Taxonomy" id="395960"/>
    <lineage>
        <taxon>Bacteria</taxon>
        <taxon>Pseudomonadati</taxon>
        <taxon>Pseudomonadota</taxon>
        <taxon>Alphaproteobacteria</taxon>
        <taxon>Hyphomicrobiales</taxon>
        <taxon>Nitrobacteraceae</taxon>
        <taxon>Rhodopseudomonas</taxon>
    </lineage>
</organism>
<reference key="1">
    <citation type="submission" date="2008-05" db="EMBL/GenBank/DDBJ databases">
        <title>Complete sequence of Rhodopseudomonas palustris TIE-1.</title>
        <authorList>
            <consortium name="US DOE Joint Genome Institute"/>
            <person name="Lucas S."/>
            <person name="Copeland A."/>
            <person name="Lapidus A."/>
            <person name="Glavina del Rio T."/>
            <person name="Dalin E."/>
            <person name="Tice H."/>
            <person name="Pitluck S."/>
            <person name="Chain P."/>
            <person name="Malfatti S."/>
            <person name="Shin M."/>
            <person name="Vergez L."/>
            <person name="Lang D."/>
            <person name="Schmutz J."/>
            <person name="Larimer F."/>
            <person name="Land M."/>
            <person name="Hauser L."/>
            <person name="Kyrpides N."/>
            <person name="Mikhailova N."/>
            <person name="Emerson D."/>
            <person name="Newman D.K."/>
            <person name="Roden E."/>
            <person name="Richardson P."/>
        </authorList>
    </citation>
    <scope>NUCLEOTIDE SEQUENCE [LARGE SCALE GENOMIC DNA]</scope>
    <source>
        <strain>TIE-1</strain>
    </source>
</reference>
<feature type="chain" id="PRO_1000092646" description="Ribosomal RNA small subunit methyltransferase G">
    <location>
        <begin position="1"/>
        <end position="223"/>
    </location>
</feature>
<feature type="binding site" evidence="1">
    <location>
        <position position="85"/>
    </location>
    <ligand>
        <name>S-adenosyl-L-methionine</name>
        <dbReference type="ChEBI" id="CHEBI:59789"/>
    </ligand>
</feature>
<feature type="binding site" evidence="1">
    <location>
        <position position="90"/>
    </location>
    <ligand>
        <name>S-adenosyl-L-methionine</name>
        <dbReference type="ChEBI" id="CHEBI:59789"/>
    </ligand>
</feature>
<feature type="binding site" evidence="1">
    <location>
        <position position="154"/>
    </location>
    <ligand>
        <name>S-adenosyl-L-methionine</name>
        <dbReference type="ChEBI" id="CHEBI:59789"/>
    </ligand>
</feature>
<protein>
    <recommendedName>
        <fullName evidence="1">Ribosomal RNA small subunit methyltransferase G</fullName>
        <ecNumber evidence="1">2.1.1.170</ecNumber>
    </recommendedName>
    <alternativeName>
        <fullName evidence="1">16S rRNA 7-methylguanosine methyltransferase</fullName>
        <shortName evidence="1">16S rRNA m7G methyltransferase</shortName>
    </alternativeName>
</protein>
<name>RSMG_RHOPT</name>
<keyword id="KW-0963">Cytoplasm</keyword>
<keyword id="KW-0489">Methyltransferase</keyword>
<keyword id="KW-0698">rRNA processing</keyword>
<keyword id="KW-0949">S-adenosyl-L-methionine</keyword>
<keyword id="KW-0808">Transferase</keyword>